<comment type="catalytic activity">
    <reaction evidence="1">
        <text>tRNA(His) + L-histidine + ATP = L-histidyl-tRNA(His) + AMP + diphosphate + H(+)</text>
        <dbReference type="Rhea" id="RHEA:17313"/>
        <dbReference type="Rhea" id="RHEA-COMP:9665"/>
        <dbReference type="Rhea" id="RHEA-COMP:9689"/>
        <dbReference type="ChEBI" id="CHEBI:15378"/>
        <dbReference type="ChEBI" id="CHEBI:30616"/>
        <dbReference type="ChEBI" id="CHEBI:33019"/>
        <dbReference type="ChEBI" id="CHEBI:57595"/>
        <dbReference type="ChEBI" id="CHEBI:78442"/>
        <dbReference type="ChEBI" id="CHEBI:78527"/>
        <dbReference type="ChEBI" id="CHEBI:456215"/>
        <dbReference type="EC" id="6.1.1.21"/>
    </reaction>
</comment>
<comment type="subunit">
    <text evidence="1">Homodimer.</text>
</comment>
<comment type="subcellular location">
    <subcellularLocation>
        <location evidence="1">Cytoplasm</location>
    </subcellularLocation>
</comment>
<comment type="similarity">
    <text evidence="1">Belongs to the class-II aminoacyl-tRNA synthetase family.</text>
</comment>
<keyword id="KW-0030">Aminoacyl-tRNA synthetase</keyword>
<keyword id="KW-0067">ATP-binding</keyword>
<keyword id="KW-0963">Cytoplasm</keyword>
<keyword id="KW-0436">Ligase</keyword>
<keyword id="KW-0547">Nucleotide-binding</keyword>
<keyword id="KW-0648">Protein biosynthesis</keyword>
<dbReference type="EC" id="6.1.1.21" evidence="1"/>
<dbReference type="EMBL" id="CP000241">
    <property type="protein sequence ID" value="ABF85198.1"/>
    <property type="molecule type" value="Genomic_DNA"/>
</dbReference>
<dbReference type="RefSeq" id="WP_000632462.1">
    <property type="nucleotide sequence ID" value="NC_008086.1"/>
</dbReference>
<dbReference type="SMR" id="Q1CS74"/>
<dbReference type="KEGG" id="hpa:HPAG1_1131"/>
<dbReference type="HOGENOM" id="CLU_025113_3_0_7"/>
<dbReference type="GO" id="GO:0005737">
    <property type="term" value="C:cytoplasm"/>
    <property type="evidence" value="ECO:0007669"/>
    <property type="project" value="UniProtKB-SubCell"/>
</dbReference>
<dbReference type="GO" id="GO:0005524">
    <property type="term" value="F:ATP binding"/>
    <property type="evidence" value="ECO:0007669"/>
    <property type="project" value="UniProtKB-UniRule"/>
</dbReference>
<dbReference type="GO" id="GO:0004821">
    <property type="term" value="F:histidine-tRNA ligase activity"/>
    <property type="evidence" value="ECO:0007669"/>
    <property type="project" value="UniProtKB-UniRule"/>
</dbReference>
<dbReference type="GO" id="GO:0006427">
    <property type="term" value="P:histidyl-tRNA aminoacylation"/>
    <property type="evidence" value="ECO:0007669"/>
    <property type="project" value="UniProtKB-UniRule"/>
</dbReference>
<dbReference type="CDD" id="cd00773">
    <property type="entry name" value="HisRS-like_core"/>
    <property type="match status" value="1"/>
</dbReference>
<dbReference type="CDD" id="cd00859">
    <property type="entry name" value="HisRS_anticodon"/>
    <property type="match status" value="1"/>
</dbReference>
<dbReference type="FunFam" id="3.30.930.10:FF:000152">
    <property type="entry name" value="Histidine--tRNA ligase"/>
    <property type="match status" value="1"/>
</dbReference>
<dbReference type="Gene3D" id="3.40.50.800">
    <property type="entry name" value="Anticodon-binding domain"/>
    <property type="match status" value="1"/>
</dbReference>
<dbReference type="Gene3D" id="3.30.930.10">
    <property type="entry name" value="Bira Bifunctional Protein, Domain 2"/>
    <property type="match status" value="1"/>
</dbReference>
<dbReference type="HAMAP" id="MF_00127">
    <property type="entry name" value="His_tRNA_synth"/>
    <property type="match status" value="1"/>
</dbReference>
<dbReference type="InterPro" id="IPR006195">
    <property type="entry name" value="aa-tRNA-synth_II"/>
</dbReference>
<dbReference type="InterPro" id="IPR045864">
    <property type="entry name" value="aa-tRNA-synth_II/BPL/LPL"/>
</dbReference>
<dbReference type="InterPro" id="IPR004154">
    <property type="entry name" value="Anticodon-bd"/>
</dbReference>
<dbReference type="InterPro" id="IPR036621">
    <property type="entry name" value="Anticodon-bd_dom_sf"/>
</dbReference>
<dbReference type="InterPro" id="IPR015807">
    <property type="entry name" value="His-tRNA-ligase"/>
</dbReference>
<dbReference type="InterPro" id="IPR041715">
    <property type="entry name" value="HisRS-like_core"/>
</dbReference>
<dbReference type="InterPro" id="IPR004516">
    <property type="entry name" value="HisRS/HisZ"/>
</dbReference>
<dbReference type="InterPro" id="IPR033656">
    <property type="entry name" value="HisRS_anticodon"/>
</dbReference>
<dbReference type="NCBIfam" id="TIGR00442">
    <property type="entry name" value="hisS"/>
    <property type="match status" value="1"/>
</dbReference>
<dbReference type="PANTHER" id="PTHR11476:SF7">
    <property type="entry name" value="HISTIDINE--TRNA LIGASE"/>
    <property type="match status" value="1"/>
</dbReference>
<dbReference type="PANTHER" id="PTHR11476">
    <property type="entry name" value="HISTIDYL-TRNA SYNTHETASE"/>
    <property type="match status" value="1"/>
</dbReference>
<dbReference type="Pfam" id="PF03129">
    <property type="entry name" value="HGTP_anticodon"/>
    <property type="match status" value="1"/>
</dbReference>
<dbReference type="Pfam" id="PF13393">
    <property type="entry name" value="tRNA-synt_His"/>
    <property type="match status" value="1"/>
</dbReference>
<dbReference type="PIRSF" id="PIRSF001549">
    <property type="entry name" value="His-tRNA_synth"/>
    <property type="match status" value="1"/>
</dbReference>
<dbReference type="SUPFAM" id="SSF52954">
    <property type="entry name" value="Class II aaRS ABD-related"/>
    <property type="match status" value="1"/>
</dbReference>
<dbReference type="SUPFAM" id="SSF55681">
    <property type="entry name" value="Class II aaRS and biotin synthetases"/>
    <property type="match status" value="1"/>
</dbReference>
<dbReference type="PROSITE" id="PS50862">
    <property type="entry name" value="AA_TRNA_LIGASE_II"/>
    <property type="match status" value="1"/>
</dbReference>
<feature type="chain" id="PRO_1000016373" description="Histidine--tRNA ligase">
    <location>
        <begin position="1"/>
        <end position="442"/>
    </location>
</feature>
<proteinExistence type="inferred from homology"/>
<reference key="1">
    <citation type="journal article" date="2006" name="Proc. Natl. Acad. Sci. U.S.A.">
        <title>The complete genome sequence of a chronic atrophic gastritis Helicobacter pylori strain: evolution during disease progression.</title>
        <authorList>
            <person name="Oh J.D."/>
            <person name="Kling-Baeckhed H."/>
            <person name="Giannakis M."/>
            <person name="Xu J."/>
            <person name="Fulton R.S."/>
            <person name="Fulton L.A."/>
            <person name="Cordum H.S."/>
            <person name="Wang C."/>
            <person name="Elliott G."/>
            <person name="Edwards J."/>
            <person name="Mardis E.R."/>
            <person name="Engstrand L.G."/>
            <person name="Gordon J.I."/>
        </authorList>
    </citation>
    <scope>NUCLEOTIDE SEQUENCE [LARGE SCALE GENOMIC DNA]</scope>
    <source>
        <strain>HPAG1</strain>
    </source>
</reference>
<organism>
    <name type="scientific">Helicobacter pylori (strain HPAG1)</name>
    <dbReference type="NCBI Taxonomy" id="357544"/>
    <lineage>
        <taxon>Bacteria</taxon>
        <taxon>Pseudomonadati</taxon>
        <taxon>Campylobacterota</taxon>
        <taxon>Epsilonproteobacteria</taxon>
        <taxon>Campylobacterales</taxon>
        <taxon>Helicobacteraceae</taxon>
        <taxon>Helicobacter</taxon>
    </lineage>
</organism>
<accession>Q1CS74</accession>
<protein>
    <recommendedName>
        <fullName evidence="1">Histidine--tRNA ligase</fullName>
        <ecNumber evidence="1">6.1.1.21</ecNumber>
    </recommendedName>
    <alternativeName>
        <fullName evidence="1">Histidyl-tRNA synthetase</fullName>
        <shortName evidence="1">HisRS</shortName>
    </alternativeName>
</protein>
<gene>
    <name evidence="1" type="primary">hisS</name>
    <name type="ordered locus">HPAG1_1131</name>
</gene>
<evidence type="ECO:0000255" key="1">
    <source>
        <dbReference type="HAMAP-Rule" id="MF_00127"/>
    </source>
</evidence>
<sequence>MITPKVLSGFKDRLPKDAIQKAQLLAKVSVVFQSFGFVPIETPHLEYAEVLLPDASSDIQKEIYRFKDHGDRDVALRFDLTVPLARFVSLHHQILGMPFKRYAIGNVFRGERAQKGRYREFTQCDFDFIGSESLVCDAEIIQVIVASLKALDLEDFCVSINHRKILNGICEYFGVSQVNEALRIVDKLEKIGLNGVEEELKKECDLNSNTIKELLEMVQIKQDDLSHAEFFEKIAYLKDYNENLKKGIQDLERLYQLLGDLQISQNLYKIDFSIARGLGYYTGIVYETTLNEMKSLGSVCSGGRYDHLTKNFSKENLQGVGASIGIDRLIVALNEMQLLDERSTQAKVLIACMHEEYFSYANRLAESLRQSGIFSEVYPEAQKIKKPFSYANHKGHEFVAVIGEEEFKSETLSLKNMHSGMQLNCLSFLKALEIIGENDEDL</sequence>
<name>SYH_HELPH</name>